<feature type="chain" id="PRO_0000292234" description="Photosystem II reaction center protein J">
    <location>
        <begin position="1"/>
        <end position="64"/>
    </location>
</feature>
<feature type="transmembrane region" description="Helical" evidence="1">
    <location>
        <begin position="35"/>
        <end position="55"/>
    </location>
</feature>
<protein>
    <recommendedName>
        <fullName evidence="1">Photosystem II reaction center protein J</fullName>
        <shortName evidence="1">PSII-J</shortName>
    </recommendedName>
</protein>
<evidence type="ECO:0000255" key="1">
    <source>
        <dbReference type="HAMAP-Rule" id="MF_01305"/>
    </source>
</evidence>
<evidence type="ECO:0000305" key="2"/>
<accession>Q7V2Z7</accession>
<sequence>MSKLKGPDGRIPDRLPDGRPAVAWERRWTEGTLPLWLVATAGGIAVIFVLGIFFYGSYQGVGAG</sequence>
<gene>
    <name evidence="1" type="primary">psbJ</name>
    <name type="ordered locus">PMM0300</name>
</gene>
<keyword id="KW-0472">Membrane</keyword>
<keyword id="KW-0602">Photosynthesis</keyword>
<keyword id="KW-0604">Photosystem II</keyword>
<keyword id="KW-0674">Reaction center</keyword>
<keyword id="KW-0793">Thylakoid</keyword>
<keyword id="KW-0812">Transmembrane</keyword>
<keyword id="KW-1133">Transmembrane helix</keyword>
<organism>
    <name type="scientific">Prochlorococcus marinus subsp. pastoris (strain CCMP1986 / NIES-2087 / MED4)</name>
    <dbReference type="NCBI Taxonomy" id="59919"/>
    <lineage>
        <taxon>Bacteria</taxon>
        <taxon>Bacillati</taxon>
        <taxon>Cyanobacteriota</taxon>
        <taxon>Cyanophyceae</taxon>
        <taxon>Synechococcales</taxon>
        <taxon>Prochlorococcaceae</taxon>
        <taxon>Prochlorococcus</taxon>
    </lineage>
</organism>
<dbReference type="EMBL" id="BX548174">
    <property type="protein sequence ID" value="CAE18759.1"/>
    <property type="molecule type" value="Genomic_DNA"/>
</dbReference>
<dbReference type="RefSeq" id="WP_011131937.1">
    <property type="nucleotide sequence ID" value="NC_005072.1"/>
</dbReference>
<dbReference type="SMR" id="Q7V2Z7"/>
<dbReference type="STRING" id="59919.PMM0300"/>
<dbReference type="KEGG" id="pmm:PMM0300"/>
<dbReference type="eggNOG" id="ENOG5030SSF">
    <property type="taxonomic scope" value="Bacteria"/>
</dbReference>
<dbReference type="HOGENOM" id="CLU_2829784_0_0_3"/>
<dbReference type="OrthoDB" id="466474at2"/>
<dbReference type="Proteomes" id="UP000001026">
    <property type="component" value="Chromosome"/>
</dbReference>
<dbReference type="GO" id="GO:0009539">
    <property type="term" value="C:photosystem II reaction center"/>
    <property type="evidence" value="ECO:0007669"/>
    <property type="project" value="InterPro"/>
</dbReference>
<dbReference type="GO" id="GO:0031676">
    <property type="term" value="C:plasma membrane-derived thylakoid membrane"/>
    <property type="evidence" value="ECO:0007669"/>
    <property type="project" value="UniProtKB-SubCell"/>
</dbReference>
<dbReference type="GO" id="GO:0015979">
    <property type="term" value="P:photosynthesis"/>
    <property type="evidence" value="ECO:0007669"/>
    <property type="project" value="UniProtKB-UniRule"/>
</dbReference>
<dbReference type="Gene3D" id="6.10.250.2070">
    <property type="match status" value="1"/>
</dbReference>
<dbReference type="HAMAP" id="MF_01305">
    <property type="entry name" value="PSII_PsbJ"/>
    <property type="match status" value="1"/>
</dbReference>
<dbReference type="InterPro" id="IPR002682">
    <property type="entry name" value="PSII_PsbJ"/>
</dbReference>
<dbReference type="InterPro" id="IPR037267">
    <property type="entry name" value="PSII_PsbJ_sf"/>
</dbReference>
<dbReference type="NCBIfam" id="NF002722">
    <property type="entry name" value="PRK02565.1"/>
    <property type="match status" value="1"/>
</dbReference>
<dbReference type="PANTHER" id="PTHR34812">
    <property type="entry name" value="PHOTOSYSTEM II REACTION CENTER PROTEIN J"/>
    <property type="match status" value="1"/>
</dbReference>
<dbReference type="PANTHER" id="PTHR34812:SF3">
    <property type="entry name" value="PHOTOSYSTEM II REACTION CENTER PROTEIN J"/>
    <property type="match status" value="1"/>
</dbReference>
<dbReference type="Pfam" id="PF01788">
    <property type="entry name" value="PsbJ"/>
    <property type="match status" value="1"/>
</dbReference>
<dbReference type="SUPFAM" id="SSF161021">
    <property type="entry name" value="Photosystem II reaction center protein J, PsbJ"/>
    <property type="match status" value="1"/>
</dbReference>
<reference key="1">
    <citation type="journal article" date="2003" name="Nature">
        <title>Genome divergence in two Prochlorococcus ecotypes reflects oceanic niche differentiation.</title>
        <authorList>
            <person name="Rocap G."/>
            <person name="Larimer F.W."/>
            <person name="Lamerdin J.E."/>
            <person name="Malfatti S."/>
            <person name="Chain P."/>
            <person name="Ahlgren N.A."/>
            <person name="Arellano A."/>
            <person name="Coleman M."/>
            <person name="Hauser L."/>
            <person name="Hess W.R."/>
            <person name="Johnson Z.I."/>
            <person name="Land M.L."/>
            <person name="Lindell D."/>
            <person name="Post A.F."/>
            <person name="Regala W."/>
            <person name="Shah M."/>
            <person name="Shaw S.L."/>
            <person name="Steglich C."/>
            <person name="Sullivan M.B."/>
            <person name="Ting C.S."/>
            <person name="Tolonen A."/>
            <person name="Webb E.A."/>
            <person name="Zinser E.R."/>
            <person name="Chisholm S.W."/>
        </authorList>
    </citation>
    <scope>NUCLEOTIDE SEQUENCE [LARGE SCALE GENOMIC DNA]</scope>
    <source>
        <strain>CCMP1986 / NIES-2087 / MED4</strain>
    </source>
</reference>
<comment type="function">
    <text evidence="1">One of the components of the core complex of photosystem II (PSII). PSII is a light-driven water:plastoquinone oxidoreductase that uses light energy to abstract electrons from H(2)O, generating O(2) and a proton gradient subsequently used for ATP formation. It consists of a core antenna complex that captures photons, and an electron transfer chain that converts photonic excitation into a charge separation.</text>
</comment>
<comment type="subunit">
    <text evidence="2">PSII is composed of 1 copy each of membrane proteins PsbA, PsbB, PsbC, PsbD, PsbE, PsbF, PsbH, PsbI, PsbJ, PsbK, PsbL, PsbM, PsbT, PsbX, PsbY, Psb30/Ycf12, peripheral proteins PsbO, CyanoQ (PsbQ), PsbU, PsbV and a large number of cofactors. It forms dimeric complexes.</text>
</comment>
<comment type="subcellular location">
    <subcellularLocation>
        <location evidence="1">Cellular thylakoid membrane</location>
        <topology evidence="1">Single-pass membrane protein</topology>
    </subcellularLocation>
</comment>
<comment type="similarity">
    <text evidence="1">Belongs to the PsbJ family.</text>
</comment>
<proteinExistence type="inferred from homology"/>
<name>PSBJ_PROMP</name>